<feature type="peptide" id="PRO_0000045038" description="Cupiennin-1a" evidence="2">
    <location>
        <begin position="1"/>
        <end position="35"/>
    </location>
</feature>
<feature type="modified residue" description="Glutamic acid 1-amide" evidence="2 5">
    <location>
        <position position="35"/>
    </location>
</feature>
<feature type="helix" evidence="9">
    <location>
        <begin position="5"/>
        <end position="8"/>
    </location>
</feature>
<feature type="turn" evidence="9">
    <location>
        <begin position="9"/>
        <end position="12"/>
    </location>
</feature>
<feature type="helix" evidence="9">
    <location>
        <begin position="13"/>
        <end position="16"/>
    </location>
</feature>
<feature type="turn" evidence="9">
    <location>
        <begin position="17"/>
        <end position="19"/>
    </location>
</feature>
<feature type="turn" evidence="9">
    <location>
        <begin position="21"/>
        <end position="25"/>
    </location>
</feature>
<feature type="turn" evidence="9">
    <location>
        <begin position="28"/>
        <end position="34"/>
    </location>
</feature>
<reference key="1">
    <citation type="journal article" date="2002" name="J. Biol. Chem.">
        <title>Cupiennin 1, a new family of highly basic antimicrobial peptides in the venom of the spider Cupiennius salei (Ctenidae).</title>
        <authorList>
            <person name="Kuhn-Nentwig L."/>
            <person name="Mueller J."/>
            <person name="Schaller J."/>
            <person name="Walz A."/>
            <person name="Dathe M."/>
            <person name="Nentwig W."/>
        </authorList>
    </citation>
    <scope>PROTEIN SEQUENCE</scope>
    <scope>SYNTHESIS</scope>
    <scope>FUNCTION</scope>
    <scope>MASS SPECTROMETRY</scope>
    <scope>TOXIC DOSE</scope>
    <scope>AMIDATION AT GLU-35</scope>
    <source>
        <tissue>Venom</tissue>
    </source>
</reference>
<reference key="2">
    <citation type="journal article" date="2000" name="Toxicon">
        <title>Characterisation of antibacterial activity of peptides isolated from the venom of the spider Cupiennius salei (Araneae: Ctenidae).</title>
        <authorList>
            <person name="Haeberli S."/>
            <person name="Kuhn-Nentwig L."/>
            <person name="Schaller J."/>
            <person name="Nentwig W."/>
        </authorList>
    </citation>
    <scope>FUNCTION</scope>
    <scope>MASS SPECTROMETRY</scope>
    <scope>SUBCELLULAR LOCATION</scope>
    <source>
        <tissue>Venom</tissue>
    </source>
</reference>
<reference key="3">
    <citation type="journal article" date="2005" name="J. Exp. Biol.">
        <title>Spider venom: enhancement of venom efficacy mediated by different synergistic strategies in Cupiennius salei.</title>
        <authorList>
            <person name="Wullschleger B."/>
            <person name="Nentwig W."/>
            <person name="Kuhn-Nentwig L."/>
        </authorList>
    </citation>
    <scope>FUNCTION IN SYNERGY WITH OTHER TOXINS</scope>
</reference>
<reference key="4">
    <citation type="journal article" date="2007" name="FEBS J.">
        <title>Cupiennin 1a, an antimicrobial peptide from the venom of the neotropical wandering spider Cupiennius salei, also inhibits the formation of nitric oxide by neuronal nitric oxide synthase.</title>
        <authorList>
            <person name="Pukala T.L."/>
            <person name="Doyle J.R."/>
            <person name="Llewellyn L.E."/>
            <person name="Kuhn-Nentwig L."/>
            <person name="Apponyi M.A."/>
            <person name="Separovic F."/>
            <person name="Bowie J.H."/>
        </authorList>
    </citation>
    <scope>FUNCTION</scope>
</reference>
<reference key="5">
    <citation type="journal article" date="2007" name="Biochemistry">
        <title>Solution structure and interaction of cupiennin 1a, a spider venom peptide, with phospholipid bilayers.</title>
        <authorList>
            <person name="Pukala T.L."/>
            <person name="Boland M.P."/>
            <person name="Gehman J.D."/>
            <person name="Kuhn-Nentwig L."/>
            <person name="Separovic F."/>
            <person name="Bowie J.H."/>
        </authorList>
    </citation>
    <scope>STRUCTURE BY NMR</scope>
    <scope>AMIDATION AT GLU-35</scope>
</reference>
<proteinExistence type="evidence at protein level"/>
<protein>
    <recommendedName>
        <fullName evidence="6">Cupiennin-1a</fullName>
        <shortName evidence="7">Cu-1a</shortName>
    </recommendedName>
    <alternativeName>
        <fullName>M-ctenitoxin-Cs1a</fullName>
        <shortName>M-CNTX-Cs1a</shortName>
    </alternativeName>
</protein>
<organism>
    <name type="scientific">Cupiennius salei</name>
    <name type="common">American wandering spider</name>
    <dbReference type="NCBI Taxonomy" id="6928"/>
    <lineage>
        <taxon>Eukaryota</taxon>
        <taxon>Metazoa</taxon>
        <taxon>Ecdysozoa</taxon>
        <taxon>Arthropoda</taxon>
        <taxon>Chelicerata</taxon>
        <taxon>Arachnida</taxon>
        <taxon>Araneae</taxon>
        <taxon>Araneomorphae</taxon>
        <taxon>Entelegynae</taxon>
        <taxon>Lycosoidea</taxon>
        <taxon>Ctenidae</taxon>
        <taxon>Cupiennius</taxon>
    </lineage>
</organism>
<dbReference type="PDB" id="2K38">
    <property type="method" value="NMR"/>
    <property type="chains" value="A=1-35"/>
</dbReference>
<dbReference type="PDBsum" id="2K38"/>
<dbReference type="BMRB" id="P83619"/>
<dbReference type="SMR" id="P83619"/>
<dbReference type="ArachnoServer" id="AS000289">
    <property type="toxin name" value="M-ctenitoxin-Cs1a"/>
</dbReference>
<dbReference type="EvolutionaryTrace" id="P83619"/>
<dbReference type="GO" id="GO:0005576">
    <property type="term" value="C:extracellular region"/>
    <property type="evidence" value="ECO:0007669"/>
    <property type="project" value="UniProtKB-SubCell"/>
</dbReference>
<dbReference type="GO" id="GO:0090729">
    <property type="term" value="F:toxin activity"/>
    <property type="evidence" value="ECO:0007669"/>
    <property type="project" value="UniProtKB-KW"/>
</dbReference>
<dbReference type="GO" id="GO:0042742">
    <property type="term" value="P:defense response to bacterium"/>
    <property type="evidence" value="ECO:0007669"/>
    <property type="project" value="UniProtKB-KW"/>
</dbReference>
<dbReference type="GO" id="GO:0031640">
    <property type="term" value="P:killing of cells of another organism"/>
    <property type="evidence" value="ECO:0007669"/>
    <property type="project" value="UniProtKB-KW"/>
</dbReference>
<dbReference type="InterPro" id="IPR035164">
    <property type="entry name" value="Cupiennin"/>
</dbReference>
<dbReference type="Pfam" id="PF17563">
    <property type="entry name" value="Cu"/>
    <property type="match status" value="1"/>
</dbReference>
<keyword id="KW-0002">3D-structure</keyword>
<keyword id="KW-0027">Amidation</keyword>
<keyword id="KW-0044">Antibiotic</keyword>
<keyword id="KW-0929">Antimicrobial</keyword>
<keyword id="KW-0204">Cytolysis</keyword>
<keyword id="KW-0903">Direct protein sequencing</keyword>
<keyword id="KW-0354">Hemolysis</keyword>
<keyword id="KW-0528">Neurotoxin</keyword>
<keyword id="KW-0964">Secreted</keyword>
<keyword id="KW-0800">Toxin</keyword>
<comment type="function">
    <text evidence="1 2 3 4">Has antimicrobial activity against B.subtilis, E.coli, E.faecalis, P.denitrificans, P.aeruginosa, P.putida, S.aureus, and S.epidermidis. Shows insecticidal and hemolytic activities. Probably acts by disturbing membrane function with its amphipathic structure. Synergistically increases the insecticidal activity of CSTX-1 (AC P81694), CSTX-9 (AC P58604), and CSTX-13 (AC P83919) by up to 65% (PubMed:15914655). Also inhibits the formation of nitric oxide by neuronal nitric oxide synthase.</text>
</comment>
<comment type="subunit">
    <text evidence="3 7">Monomer (Probable). Interacts with CSTX-1 (AC P81694), CSTX-9 (AC P58604), and CSTX-13 (AC P83919) (PubMed:15914655).</text>
</comment>
<comment type="subcellular location">
    <subcellularLocation>
        <location evidence="1">Secreted</location>
    </subcellularLocation>
</comment>
<comment type="tissue specificity">
    <text evidence="8">Expressed by the venom gland.</text>
</comment>
<comment type="mass spectrometry"/>
<comment type="mass spectrometry"/>
<comment type="toxic dose">
    <text evidence="2">LD(50) is 5.9 pmol/mg on Drosophila.</text>
</comment>
<comment type="similarity">
    <text evidence="7">Belongs to the cationic peptide 04 (cupiennin) family. 01 subfamily.</text>
</comment>
<evidence type="ECO:0000269" key="1">
    <source>
    </source>
</evidence>
<evidence type="ECO:0000269" key="2">
    <source>
    </source>
</evidence>
<evidence type="ECO:0000269" key="3">
    <source>
    </source>
</evidence>
<evidence type="ECO:0000269" key="4">
    <source>
    </source>
</evidence>
<evidence type="ECO:0000269" key="5">
    <source>
    </source>
</evidence>
<evidence type="ECO:0000303" key="6">
    <source>
    </source>
</evidence>
<evidence type="ECO:0000305" key="7"/>
<evidence type="ECO:0000305" key="8">
    <source>
    </source>
</evidence>
<evidence type="ECO:0007829" key="9">
    <source>
        <dbReference type="PDB" id="2K38"/>
    </source>
</evidence>
<name>TXC1A_CUPSA</name>
<accession>P83619</accession>
<sequence>GFGALFKFLAKKVAKTVAKQAAKQGAKYVVNKQME</sequence>